<accession>Q8D8F4</accession>
<gene>
    <name evidence="1" type="primary">udk</name>
    <name type="ordered locus">VV1_3025</name>
</gene>
<name>URK_VIBVU</name>
<comment type="catalytic activity">
    <reaction evidence="1">
        <text>uridine + ATP = UMP + ADP + H(+)</text>
        <dbReference type="Rhea" id="RHEA:16825"/>
        <dbReference type="ChEBI" id="CHEBI:15378"/>
        <dbReference type="ChEBI" id="CHEBI:16704"/>
        <dbReference type="ChEBI" id="CHEBI:30616"/>
        <dbReference type="ChEBI" id="CHEBI:57865"/>
        <dbReference type="ChEBI" id="CHEBI:456216"/>
        <dbReference type="EC" id="2.7.1.48"/>
    </reaction>
</comment>
<comment type="catalytic activity">
    <reaction evidence="1">
        <text>cytidine + ATP = CMP + ADP + H(+)</text>
        <dbReference type="Rhea" id="RHEA:24674"/>
        <dbReference type="ChEBI" id="CHEBI:15378"/>
        <dbReference type="ChEBI" id="CHEBI:17562"/>
        <dbReference type="ChEBI" id="CHEBI:30616"/>
        <dbReference type="ChEBI" id="CHEBI:60377"/>
        <dbReference type="ChEBI" id="CHEBI:456216"/>
        <dbReference type="EC" id="2.7.1.48"/>
    </reaction>
</comment>
<comment type="pathway">
    <text evidence="1">Pyrimidine metabolism; CTP biosynthesis via salvage pathway; CTP from cytidine: step 1/3.</text>
</comment>
<comment type="pathway">
    <text evidence="1">Pyrimidine metabolism; UMP biosynthesis via salvage pathway; UMP from uridine: step 1/1.</text>
</comment>
<comment type="subcellular location">
    <subcellularLocation>
        <location evidence="1">Cytoplasm</location>
    </subcellularLocation>
</comment>
<comment type="similarity">
    <text evidence="1">Belongs to the uridine kinase family.</text>
</comment>
<feature type="chain" id="PRO_0000164508" description="Uridine kinase">
    <location>
        <begin position="1"/>
        <end position="213"/>
    </location>
</feature>
<feature type="binding site" evidence="1">
    <location>
        <begin position="14"/>
        <end position="21"/>
    </location>
    <ligand>
        <name>ATP</name>
        <dbReference type="ChEBI" id="CHEBI:30616"/>
    </ligand>
</feature>
<protein>
    <recommendedName>
        <fullName evidence="1">Uridine kinase</fullName>
        <ecNumber evidence="1">2.7.1.48</ecNumber>
    </recommendedName>
    <alternativeName>
        <fullName evidence="1">Cytidine monophosphokinase</fullName>
    </alternativeName>
    <alternativeName>
        <fullName evidence="1">Uridine monophosphokinase</fullName>
    </alternativeName>
</protein>
<organism>
    <name type="scientific">Vibrio vulnificus (strain CMCP6)</name>
    <dbReference type="NCBI Taxonomy" id="216895"/>
    <lineage>
        <taxon>Bacteria</taxon>
        <taxon>Pseudomonadati</taxon>
        <taxon>Pseudomonadota</taxon>
        <taxon>Gammaproteobacteria</taxon>
        <taxon>Vibrionales</taxon>
        <taxon>Vibrionaceae</taxon>
        <taxon>Vibrio</taxon>
    </lineage>
</organism>
<sequence length="213" mass="24245">MSEKSQCVIVGIAGASASGKSLIASTIYNELRAKVGDHQIGVITEDCYYNDQSHLSMEERVKTNYDHPNALDHDLLCEHLEKLMKGESVEVPEYSYTEHTRTENTTTMTPKKVIILEGILLLTDPRLRDLMHATVFMDTPLDICLLRRVKRDVEERGRTMESVLKQYQKTVRPMFMQFIEPSKQYADIIVPRGGKNRIAIDVLKAHIAKLLKA</sequence>
<proteinExistence type="inferred from homology"/>
<keyword id="KW-0067">ATP-binding</keyword>
<keyword id="KW-0963">Cytoplasm</keyword>
<keyword id="KW-0418">Kinase</keyword>
<keyword id="KW-0547">Nucleotide-binding</keyword>
<keyword id="KW-0808">Transferase</keyword>
<dbReference type="EC" id="2.7.1.48" evidence="1"/>
<dbReference type="EMBL" id="AE016795">
    <property type="protein sequence ID" value="AAO11350.1"/>
    <property type="molecule type" value="Genomic_DNA"/>
</dbReference>
<dbReference type="RefSeq" id="WP_011080832.1">
    <property type="nucleotide sequence ID" value="NC_004459.3"/>
</dbReference>
<dbReference type="SMR" id="Q8D8F4"/>
<dbReference type="GeneID" id="93894232"/>
<dbReference type="KEGG" id="vvu:VV1_3025"/>
<dbReference type="HOGENOM" id="CLU_021278_1_2_6"/>
<dbReference type="UniPathway" id="UPA00574">
    <property type="reaction ID" value="UER00637"/>
</dbReference>
<dbReference type="UniPathway" id="UPA00579">
    <property type="reaction ID" value="UER00640"/>
</dbReference>
<dbReference type="Proteomes" id="UP000002275">
    <property type="component" value="Chromosome 1"/>
</dbReference>
<dbReference type="GO" id="GO:0005737">
    <property type="term" value="C:cytoplasm"/>
    <property type="evidence" value="ECO:0007669"/>
    <property type="project" value="UniProtKB-SubCell"/>
</dbReference>
<dbReference type="GO" id="GO:0005524">
    <property type="term" value="F:ATP binding"/>
    <property type="evidence" value="ECO:0007669"/>
    <property type="project" value="UniProtKB-UniRule"/>
</dbReference>
<dbReference type="GO" id="GO:0043771">
    <property type="term" value="F:cytidine kinase activity"/>
    <property type="evidence" value="ECO:0007669"/>
    <property type="project" value="RHEA"/>
</dbReference>
<dbReference type="GO" id="GO:0004849">
    <property type="term" value="F:uridine kinase activity"/>
    <property type="evidence" value="ECO:0007669"/>
    <property type="project" value="UniProtKB-UniRule"/>
</dbReference>
<dbReference type="GO" id="GO:0044211">
    <property type="term" value="P:CTP salvage"/>
    <property type="evidence" value="ECO:0007669"/>
    <property type="project" value="UniProtKB-UniRule"/>
</dbReference>
<dbReference type="GO" id="GO:0044206">
    <property type="term" value="P:UMP salvage"/>
    <property type="evidence" value="ECO:0007669"/>
    <property type="project" value="UniProtKB-UniRule"/>
</dbReference>
<dbReference type="CDD" id="cd02023">
    <property type="entry name" value="UMPK"/>
    <property type="match status" value="1"/>
</dbReference>
<dbReference type="FunFam" id="3.40.50.300:FF:000252">
    <property type="entry name" value="Uridine kinase"/>
    <property type="match status" value="1"/>
</dbReference>
<dbReference type="Gene3D" id="3.40.50.300">
    <property type="entry name" value="P-loop containing nucleotide triphosphate hydrolases"/>
    <property type="match status" value="1"/>
</dbReference>
<dbReference type="HAMAP" id="MF_00551">
    <property type="entry name" value="Uridine_kinase"/>
    <property type="match status" value="1"/>
</dbReference>
<dbReference type="InterPro" id="IPR027417">
    <property type="entry name" value="P-loop_NTPase"/>
</dbReference>
<dbReference type="InterPro" id="IPR006083">
    <property type="entry name" value="PRK/URK"/>
</dbReference>
<dbReference type="InterPro" id="IPR026008">
    <property type="entry name" value="Uridine_kinase"/>
</dbReference>
<dbReference type="InterPro" id="IPR000764">
    <property type="entry name" value="Uridine_kinase-like"/>
</dbReference>
<dbReference type="NCBIfam" id="NF004018">
    <property type="entry name" value="PRK05480.1"/>
    <property type="match status" value="1"/>
</dbReference>
<dbReference type="NCBIfam" id="TIGR00235">
    <property type="entry name" value="udk"/>
    <property type="match status" value="1"/>
</dbReference>
<dbReference type="PANTHER" id="PTHR10285">
    <property type="entry name" value="URIDINE KINASE"/>
    <property type="match status" value="1"/>
</dbReference>
<dbReference type="Pfam" id="PF00485">
    <property type="entry name" value="PRK"/>
    <property type="match status" value="1"/>
</dbReference>
<dbReference type="PRINTS" id="PR00988">
    <property type="entry name" value="URIDINKINASE"/>
</dbReference>
<dbReference type="SUPFAM" id="SSF52540">
    <property type="entry name" value="P-loop containing nucleoside triphosphate hydrolases"/>
    <property type="match status" value="1"/>
</dbReference>
<evidence type="ECO:0000255" key="1">
    <source>
        <dbReference type="HAMAP-Rule" id="MF_00551"/>
    </source>
</evidence>
<reference key="1">
    <citation type="submission" date="2002-12" db="EMBL/GenBank/DDBJ databases">
        <title>Complete genome sequence of Vibrio vulnificus CMCP6.</title>
        <authorList>
            <person name="Rhee J.H."/>
            <person name="Kim S.Y."/>
            <person name="Chung S.S."/>
            <person name="Kim J.J."/>
            <person name="Moon Y.H."/>
            <person name="Jeong H."/>
            <person name="Choy H.E."/>
        </authorList>
    </citation>
    <scope>NUCLEOTIDE SEQUENCE [LARGE SCALE GENOMIC DNA]</scope>
    <source>
        <strain>CMCP6</strain>
    </source>
</reference>